<keyword id="KW-0963">Cytoplasm</keyword>
<keyword id="KW-0312">Gluconeogenesis</keyword>
<keyword id="KW-0324">Glycolysis</keyword>
<keyword id="KW-0413">Isomerase</keyword>
<gene>
    <name type="primary">PGIC1</name>
</gene>
<protein>
    <recommendedName>
        <fullName>Glucose-6-phosphate isomerase, cytosolic 1</fullName>
        <shortName>GPI</shortName>
        <ecNumber>5.3.1.9</ecNumber>
    </recommendedName>
    <alternativeName>
        <fullName>Phosphoglucose isomerase</fullName>
        <shortName>PGI</shortName>
    </alternativeName>
    <alternativeName>
        <fullName>Phosphohexose isomerase</fullName>
        <shortName>PHI</shortName>
    </alternativeName>
</protein>
<sequence length="568" mass="62665">MASPALISETEAWKDLKAHLEGIKRTHLRELMGDTERCQSMMVEFDNIFLDYSRQQAIPDTIKKLYKLADAAHLKQKIDRMYNGDHINSTENRSVLHVALRAPRDSAICSDGKNVVPDVWNVLDKIKDFSDRVRNGSWIGATGKELKDVIAVGIGGSFLGPLFVHTALQTDPEASKNARGRELRFLANVDPIDVARNISGLNPETTLVVVVSKTFTTAETMLNARTLREWISSALGPTAVAKHMVAVSTNIPLVEKFGIDPNNAFAFWDWVGGRYSVCSAVGVLPLSLQYGFAVVEKFLQGAHSIDQHFSSAPFEKNIPVLLGLLSVWNVSFLGYPARAILPYSQALEKLAPHIQQVSMESNGKGVSIDGLPLPFESGEIDFGEPGTNGQHSFYQLIHQGRVIPCDFIGVVKSQQPVYLKGEVVNNHDELMSNFFAQPDALAYGKTPEQLKNENVAEHLIPHKTFTGNRPSLSILLPTLDAYRIGQLLAIYEHRVAVQGFVWGINSFDQWGVELGKSLATQVRKQLHGSRVKGEPVEGFNFSTKTLLTKYLEATSDVPADPSTLLPNI</sequence>
<comment type="catalytic activity">
    <reaction>
        <text>alpha-D-glucose 6-phosphate = beta-D-fructose 6-phosphate</text>
        <dbReference type="Rhea" id="RHEA:11816"/>
        <dbReference type="ChEBI" id="CHEBI:57634"/>
        <dbReference type="ChEBI" id="CHEBI:58225"/>
        <dbReference type="EC" id="5.3.1.9"/>
    </reaction>
</comment>
<comment type="pathway">
    <text>Carbohydrate degradation; glycolysis; D-glyceraldehyde 3-phosphate and glycerone phosphate from D-glucose: step 2/4.</text>
</comment>
<comment type="subunit">
    <text evidence="1">Homodimer.</text>
</comment>
<comment type="subcellular location">
    <subcellularLocation>
        <location evidence="1">Cytoplasm</location>
    </subcellularLocation>
</comment>
<comment type="similarity">
    <text evidence="2">Belongs to the GPI family.</text>
</comment>
<accession>P54237</accession>
<evidence type="ECO:0000250" key="1"/>
<evidence type="ECO:0000305" key="2"/>
<proteinExistence type="inferred from homology"/>
<organism>
    <name type="scientific">Clarkia mildrediae</name>
    <dbReference type="NCBI Taxonomy" id="49756"/>
    <lineage>
        <taxon>Eukaryota</taxon>
        <taxon>Viridiplantae</taxon>
        <taxon>Streptophyta</taxon>
        <taxon>Embryophyta</taxon>
        <taxon>Tracheophyta</taxon>
        <taxon>Spermatophyta</taxon>
        <taxon>Magnoliopsida</taxon>
        <taxon>eudicotyledons</taxon>
        <taxon>Gunneridae</taxon>
        <taxon>Pentapetalae</taxon>
        <taxon>rosids</taxon>
        <taxon>malvids</taxon>
        <taxon>Myrtales</taxon>
        <taxon>Onagraceae</taxon>
        <taxon>Onagroideae</taxon>
        <taxon>Onagreae</taxon>
        <taxon>Clarkia</taxon>
    </lineage>
</organism>
<feature type="chain" id="PRO_0000180556" description="Glucose-6-phosphate isomerase, cytosolic 1">
    <location>
        <begin position="1"/>
        <end position="568"/>
    </location>
</feature>
<feature type="active site" description="Proton donor" evidence="1">
    <location>
        <position position="360"/>
    </location>
</feature>
<feature type="active site" evidence="1">
    <location>
        <position position="391"/>
    </location>
</feature>
<feature type="active site" evidence="1">
    <location>
        <position position="516"/>
    </location>
</feature>
<name>G6PI1_CLAMI</name>
<dbReference type="EC" id="5.3.1.9"/>
<dbReference type="EMBL" id="X89389">
    <property type="protein sequence ID" value="CAA61569.1"/>
    <property type="molecule type" value="Genomic_DNA"/>
</dbReference>
<dbReference type="SMR" id="P54237"/>
<dbReference type="UniPathway" id="UPA00109">
    <property type="reaction ID" value="UER00181"/>
</dbReference>
<dbReference type="GO" id="GO:0005829">
    <property type="term" value="C:cytosol"/>
    <property type="evidence" value="ECO:0007669"/>
    <property type="project" value="TreeGrafter"/>
</dbReference>
<dbReference type="GO" id="GO:0097367">
    <property type="term" value="F:carbohydrate derivative binding"/>
    <property type="evidence" value="ECO:0007669"/>
    <property type="project" value="InterPro"/>
</dbReference>
<dbReference type="GO" id="GO:0004347">
    <property type="term" value="F:glucose-6-phosphate isomerase activity"/>
    <property type="evidence" value="ECO:0007669"/>
    <property type="project" value="UniProtKB-EC"/>
</dbReference>
<dbReference type="GO" id="GO:0048029">
    <property type="term" value="F:monosaccharide binding"/>
    <property type="evidence" value="ECO:0007669"/>
    <property type="project" value="TreeGrafter"/>
</dbReference>
<dbReference type="GO" id="GO:0006094">
    <property type="term" value="P:gluconeogenesis"/>
    <property type="evidence" value="ECO:0007669"/>
    <property type="project" value="UniProtKB-KW"/>
</dbReference>
<dbReference type="GO" id="GO:0051156">
    <property type="term" value="P:glucose 6-phosphate metabolic process"/>
    <property type="evidence" value="ECO:0007669"/>
    <property type="project" value="TreeGrafter"/>
</dbReference>
<dbReference type="GO" id="GO:0006096">
    <property type="term" value="P:glycolytic process"/>
    <property type="evidence" value="ECO:0007669"/>
    <property type="project" value="UniProtKB-UniPathway"/>
</dbReference>
<dbReference type="CDD" id="cd05015">
    <property type="entry name" value="SIS_PGI_1"/>
    <property type="match status" value="1"/>
</dbReference>
<dbReference type="CDD" id="cd05016">
    <property type="entry name" value="SIS_PGI_2"/>
    <property type="match status" value="1"/>
</dbReference>
<dbReference type="FunFam" id="1.10.1390.10:FF:000002">
    <property type="entry name" value="Glucose-6-phosphate isomerase"/>
    <property type="match status" value="1"/>
</dbReference>
<dbReference type="FunFam" id="3.40.50.10490:FF:000018">
    <property type="entry name" value="Glucose-6-phosphate isomerase"/>
    <property type="match status" value="1"/>
</dbReference>
<dbReference type="FunFam" id="3.40.50.10490:FF:000031">
    <property type="entry name" value="Glucose-6-phosphate isomerase"/>
    <property type="match status" value="1"/>
</dbReference>
<dbReference type="FunFam" id="3.40.50.10490:FF:000048">
    <property type="entry name" value="Glucose-6-phosphate isomerase"/>
    <property type="match status" value="1"/>
</dbReference>
<dbReference type="Gene3D" id="1.10.1390.10">
    <property type="match status" value="1"/>
</dbReference>
<dbReference type="Gene3D" id="3.40.50.10490">
    <property type="entry name" value="Glucose-6-phosphate isomerase like protein, domain 1"/>
    <property type="match status" value="2"/>
</dbReference>
<dbReference type="HAMAP" id="MF_00473">
    <property type="entry name" value="G6P_isomerase"/>
    <property type="match status" value="1"/>
</dbReference>
<dbReference type="InterPro" id="IPR001672">
    <property type="entry name" value="G6P_Isomerase"/>
</dbReference>
<dbReference type="InterPro" id="IPR023096">
    <property type="entry name" value="G6P_Isomerase_C"/>
</dbReference>
<dbReference type="InterPro" id="IPR018189">
    <property type="entry name" value="Phosphoglucose_isomerase_CS"/>
</dbReference>
<dbReference type="InterPro" id="IPR046348">
    <property type="entry name" value="SIS_dom_sf"/>
</dbReference>
<dbReference type="InterPro" id="IPR035476">
    <property type="entry name" value="SIS_PGI_1"/>
</dbReference>
<dbReference type="InterPro" id="IPR035482">
    <property type="entry name" value="SIS_PGI_2"/>
</dbReference>
<dbReference type="NCBIfam" id="NF001211">
    <property type="entry name" value="PRK00179.1"/>
    <property type="match status" value="1"/>
</dbReference>
<dbReference type="PANTHER" id="PTHR11469">
    <property type="entry name" value="GLUCOSE-6-PHOSPHATE ISOMERASE"/>
    <property type="match status" value="1"/>
</dbReference>
<dbReference type="PANTHER" id="PTHR11469:SF1">
    <property type="entry name" value="GLUCOSE-6-PHOSPHATE ISOMERASE"/>
    <property type="match status" value="1"/>
</dbReference>
<dbReference type="Pfam" id="PF00342">
    <property type="entry name" value="PGI"/>
    <property type="match status" value="1"/>
</dbReference>
<dbReference type="PRINTS" id="PR00662">
    <property type="entry name" value="G6PISOMERASE"/>
</dbReference>
<dbReference type="SUPFAM" id="SSF53697">
    <property type="entry name" value="SIS domain"/>
    <property type="match status" value="1"/>
</dbReference>
<dbReference type="PROSITE" id="PS00765">
    <property type="entry name" value="P_GLUCOSE_ISOMERASE_1"/>
    <property type="match status" value="1"/>
</dbReference>
<dbReference type="PROSITE" id="PS00174">
    <property type="entry name" value="P_GLUCOSE_ISOMERASE_2"/>
    <property type="match status" value="1"/>
</dbReference>
<dbReference type="PROSITE" id="PS51463">
    <property type="entry name" value="P_GLUCOSE_ISOMERASE_3"/>
    <property type="match status" value="1"/>
</dbReference>
<reference key="1">
    <citation type="journal article" date="1996" name="Syst. Bot.">
        <title>Phylogenetic relationships among the sections of Clarkia (Onagraceae) inferred from the nucleotide sequences of PgiC.</title>
        <authorList>
            <person name="Gottlieb L.D."/>
            <person name="Ford V.S."/>
        </authorList>
        <dbReference type="AGRICOLA" id="IND20535960"/>
    </citation>
    <scope>NUCLEOTIDE SEQUENCE [GENOMIC DNA]</scope>
    <source>
        <strain>Population Weeden 165A</strain>
    </source>
</reference>